<protein>
    <recommendedName>
        <fullName>Transcription factor PDR1</fullName>
    </recommendedName>
    <alternativeName>
        <fullName>Pleiotropic drug resistance protein 1</fullName>
    </alternativeName>
</protein>
<comment type="function">
    <text>Positive regulator of proteins involved in permeability. PDR1 and PDR3 jointly control the transcription level of both SNQ2 and PDR5.</text>
</comment>
<comment type="interaction">
    <interactant intactId="EBI-13019">
        <id>P12383</id>
    </interactant>
    <interactant intactId="EBI-7305">
        <id>P19659</id>
        <label>GAL11</label>
    </interactant>
    <organismsDiffer>false</organismsDiffer>
    <experiments>5</experiments>
</comment>
<comment type="subcellular location">
    <subcellularLocation>
        <location>Nucleus</location>
    </subcellularLocation>
</comment>
<comment type="domain">
    <text evidence="6">The 9aaTAD motif (residues 1054 to 1062) is a transactivation domain present in a large number of yeast and animal transcription factors.</text>
</comment>
<comment type="miscellaneous">
    <text evidence="3">Present with 1300 molecules/cell in log phase SD medium.</text>
</comment>
<feature type="chain" id="PRO_0000114961" description="Transcription factor PDR1">
    <location>
        <begin position="1"/>
        <end position="1068"/>
    </location>
</feature>
<feature type="DNA-binding region" description="Zn(2)-C6 fungal-type" evidence="1">
    <location>
        <begin position="46"/>
        <end position="72"/>
    </location>
</feature>
<feature type="region of interest" description="Disordered" evidence="2">
    <location>
        <begin position="1"/>
        <end position="38"/>
    </location>
</feature>
<feature type="region of interest" description="Disordered" evidence="2">
    <location>
        <begin position="95"/>
        <end position="120"/>
    </location>
</feature>
<feature type="region of interest" description="Disordered" evidence="2">
    <location>
        <begin position="133"/>
        <end position="166"/>
    </location>
</feature>
<feature type="region of interest" description="Disordered" evidence="2">
    <location>
        <begin position="1005"/>
        <end position="1029"/>
    </location>
</feature>
<feature type="short sequence motif" description="9aaTAD" evidence="4">
    <location>
        <begin position="1054"/>
        <end position="1062"/>
    </location>
</feature>
<feature type="compositionally biased region" description="Polar residues" evidence="2">
    <location>
        <begin position="17"/>
        <end position="31"/>
    </location>
</feature>
<feature type="compositionally biased region" description="Polar residues" evidence="2">
    <location>
        <begin position="104"/>
        <end position="114"/>
    </location>
</feature>
<feature type="compositionally biased region" description="Low complexity" evidence="2">
    <location>
        <begin position="135"/>
        <end position="146"/>
    </location>
</feature>
<feature type="modified residue" description="Phosphoserine" evidence="9">
    <location>
        <position position="21"/>
    </location>
</feature>
<feature type="modified residue" description="Phosphoserine" evidence="8">
    <location>
        <position position="930"/>
    </location>
</feature>
<feature type="modified residue" description="Phosphoserine" evidence="9">
    <location>
        <position position="942"/>
    </location>
</feature>
<feature type="modified residue" description="Phosphoserine" evidence="7 8 9">
    <location>
        <position position="948"/>
    </location>
</feature>
<feature type="sequence conflict" description="In Ref. 1; AAA34849 and 2; AAD13897." evidence="5" ref="1 2">
    <original>Q</original>
    <variation>K</variation>
    <location>
        <position position="411"/>
    </location>
</feature>
<feature type="sequence conflict" description="In Ref. 2; AAD13897." evidence="5" ref="2">
    <original>A</original>
    <variation>R</variation>
    <location>
        <position position="530"/>
    </location>
</feature>
<feature type="sequence conflict" description="In Ref. 1; AAA34849 and 2; AAD13897." evidence="5" ref="1 2">
    <original>T</original>
    <variation>A</variation>
    <location>
        <position position="820"/>
    </location>
</feature>
<feature type="sequence conflict" description="In Ref. 1; AAA34849 and 2; AAD13897." evidence="5" ref="1 2">
    <original>T</original>
    <variation>I</variation>
    <location>
        <position position="921"/>
    </location>
</feature>
<feature type="sequence conflict" description="In Ref. 1; AAA34849 and 2; AAD13897." evidence="5" ref="1 2">
    <original>T</original>
    <variation>S</variation>
    <location>
        <position position="981"/>
    </location>
</feature>
<feature type="sequence conflict" description="In Ref. 1; AAA34849 and 2; AAD13897." evidence="5" ref="1 2">
    <location>
        <begin position="1015"/>
        <end position="1019"/>
    </location>
</feature>
<sequence length="1068" mass="121794">MRGLTPKNGVHIETGPDTESSADSSNFSTGFSGKIRKPRSKVSKACDNCRKRKIKCNGKFPCASCEIYSCECTFSTRQGGARIKNLHKTSLEGTTVQVKEETDSSSTSFSNPQRCTDGPCAVEQPTKFFENFKLGGRSSGDNSGSDGKNDDDVNRNGFYEDDSESQATLTSLQTTLKNLKEMAHLGTHVTSAIESIELQISDLLKRWEPKVRTKELATTKFYPNKSIETQLMKNKYCDVVHLTRYAAWSNNKKDQDTSSQPLIDEIFGLYSPFQFLSLQGIGKCFQNYRSKSKCEIFPRTAKETIYIMLRFFDVCFHHINQGCVSIANPLENYLQKMNLLPSTPSSISSAGSPNTAHTKSHVALVINHLPQPFVRNITGISNSELLSEMNNDISMFGILLKMLDMHKNSYQNFLMEITSNPSVAKNTQSIDVLQEFIHYCQAGEALIALCYSYYNSTLYNYVDFTCDITHLEQLLYFLDLLFWLSEIYGFEKVLNVAVHFVSRVGLSRWEFYVGLDENFAERRRNLWWKAFYFEKTLASKLGYPSNIDDSKINCLLPKNFRDVGFLDNRDFIENVHLVRRSEAFDNMCISDLKYYGELAVLQIVSHFSSSVLFNEKFTSIRNTSKPSVVREKLLFEVLEIFNETEMKYDAIKEQTGKLFDIAFSKDSTELKVSREDKIMASKFVLFYEHHFCRMVNESDNIVARLCVHRRPSILIENLKIYLHKIYKSWTDMNKILLDFDNDYSVYRSFAHYSISCIILVSQAFSVAEFIKVNDVVNMIRVFKRFLDIKIFSENETNEHVFNSQSFKDYTRAFSFLTIVTRIMLLAYGESSSTNLDVISKYIDENAPDLKGIIELVLDTNSCAYRFLLEPVQKSGFHLTVSQMLKNRKFQEPLMSNEDNKQMKHNSGKNLNPDLPSLKTGTSCLLNGIESPQLPFNGRSAPSPVRNNSLPEFAQLPSFRSLSVSDMINPDYAQPTNGQNNTQVQSNKPINAQQQIPTSVQVPFMNTNEINNNNNNNNNNKNNINNINNNNSNNFSATSFNLGTLDEFVNNGDLEDLYSILWSDVYPDS</sequence>
<name>PDR1_YEAST</name>
<dbReference type="EMBL" id="J03487">
    <property type="protein sequence ID" value="AAA34849.1"/>
    <property type="molecule type" value="Genomic_DNA"/>
</dbReference>
<dbReference type="EMBL" id="S58126">
    <property type="protein sequence ID" value="AAD13897.2"/>
    <property type="molecule type" value="Genomic_DNA"/>
</dbReference>
<dbReference type="EMBL" id="Z72535">
    <property type="protein sequence ID" value="CAA96713.1"/>
    <property type="molecule type" value="Genomic_DNA"/>
</dbReference>
<dbReference type="EMBL" id="BK006941">
    <property type="protein sequence ID" value="DAA08085.1"/>
    <property type="molecule type" value="Genomic_DNA"/>
</dbReference>
<dbReference type="PIR" id="S64015">
    <property type="entry name" value="S64015"/>
</dbReference>
<dbReference type="RefSeq" id="NP_011502.1">
    <property type="nucleotide sequence ID" value="NM_001180878.1"/>
</dbReference>
<dbReference type="SMR" id="P12383"/>
<dbReference type="BioGRID" id="33233">
    <property type="interactions" value="261"/>
</dbReference>
<dbReference type="DIP" id="DIP-978N"/>
<dbReference type="FunCoup" id="P12383">
    <property type="interactions" value="4975"/>
</dbReference>
<dbReference type="IntAct" id="P12383">
    <property type="interactions" value="49"/>
</dbReference>
<dbReference type="MINT" id="P12383"/>
<dbReference type="STRING" id="4932.YGL013C"/>
<dbReference type="iPTMnet" id="P12383"/>
<dbReference type="PaxDb" id="4932-YGL013C"/>
<dbReference type="PeptideAtlas" id="P12383"/>
<dbReference type="EnsemblFungi" id="YGL013C_mRNA">
    <property type="protein sequence ID" value="YGL013C"/>
    <property type="gene ID" value="YGL013C"/>
</dbReference>
<dbReference type="GeneID" id="852871"/>
<dbReference type="KEGG" id="sce:YGL013C"/>
<dbReference type="AGR" id="SGD:S000002981"/>
<dbReference type="SGD" id="S000002981">
    <property type="gene designation" value="PDR1"/>
</dbReference>
<dbReference type="VEuPathDB" id="FungiDB:YGL013C"/>
<dbReference type="eggNOG" id="ENOG502QV4Q">
    <property type="taxonomic scope" value="Eukaryota"/>
</dbReference>
<dbReference type="GeneTree" id="ENSGT00940000176364"/>
<dbReference type="HOGENOM" id="CLU_304446_0_0_1"/>
<dbReference type="InParanoid" id="P12383"/>
<dbReference type="OMA" id="HRWEFYV"/>
<dbReference type="OrthoDB" id="3364175at2759"/>
<dbReference type="BioCyc" id="YEAST:G3O-30534-MONOMER"/>
<dbReference type="BioGRID-ORCS" id="852871">
    <property type="hits" value="1 hit in 13 CRISPR screens"/>
</dbReference>
<dbReference type="PHI-base" id="PHI:2814"/>
<dbReference type="PRO" id="PR:P12383"/>
<dbReference type="Proteomes" id="UP000002311">
    <property type="component" value="Chromosome VII"/>
</dbReference>
<dbReference type="RNAct" id="P12383">
    <property type="molecule type" value="protein"/>
</dbReference>
<dbReference type="GO" id="GO:0005829">
    <property type="term" value="C:cytosol"/>
    <property type="evidence" value="ECO:0000314"/>
    <property type="project" value="SGD"/>
</dbReference>
<dbReference type="GO" id="GO:0005634">
    <property type="term" value="C:nucleus"/>
    <property type="evidence" value="ECO:0000314"/>
    <property type="project" value="SGD"/>
</dbReference>
<dbReference type="GO" id="GO:0001228">
    <property type="term" value="F:DNA-binding transcription activator activity, RNA polymerase II-specific"/>
    <property type="evidence" value="ECO:0000315"/>
    <property type="project" value="SGD"/>
</dbReference>
<dbReference type="GO" id="GO:0000981">
    <property type="term" value="F:DNA-binding transcription factor activity, RNA polymerase II-specific"/>
    <property type="evidence" value="ECO:0000318"/>
    <property type="project" value="GO_Central"/>
</dbReference>
<dbReference type="GO" id="GO:0043565">
    <property type="term" value="F:sequence-specific DNA binding"/>
    <property type="evidence" value="ECO:0000318"/>
    <property type="project" value="GO_Central"/>
</dbReference>
<dbReference type="GO" id="GO:0008270">
    <property type="term" value="F:zinc ion binding"/>
    <property type="evidence" value="ECO:0007669"/>
    <property type="project" value="InterPro"/>
</dbReference>
<dbReference type="GO" id="GO:0071466">
    <property type="term" value="P:cellular response to xenobiotic stimulus"/>
    <property type="evidence" value="ECO:0000315"/>
    <property type="project" value="SGD"/>
</dbReference>
<dbReference type="GO" id="GO:0006351">
    <property type="term" value="P:DNA-templated transcription"/>
    <property type="evidence" value="ECO:0007669"/>
    <property type="project" value="InterPro"/>
</dbReference>
<dbReference type="GO" id="GO:2001040">
    <property type="term" value="P:positive regulation of cellular response to drug"/>
    <property type="evidence" value="ECO:0000315"/>
    <property type="project" value="SGD"/>
</dbReference>
<dbReference type="GO" id="GO:0045944">
    <property type="term" value="P:positive regulation of transcription by RNA polymerase II"/>
    <property type="evidence" value="ECO:0000315"/>
    <property type="project" value="SGD"/>
</dbReference>
<dbReference type="CDD" id="cd12148">
    <property type="entry name" value="fungal_TF_MHR"/>
    <property type="match status" value="1"/>
</dbReference>
<dbReference type="CDD" id="cd00067">
    <property type="entry name" value="GAL4"/>
    <property type="match status" value="1"/>
</dbReference>
<dbReference type="Gene3D" id="4.10.240.10">
    <property type="entry name" value="Zn(2)-C6 fungal-type DNA-binding domain"/>
    <property type="match status" value="1"/>
</dbReference>
<dbReference type="InterPro" id="IPR050987">
    <property type="entry name" value="AtrR-like"/>
</dbReference>
<dbReference type="InterPro" id="IPR007219">
    <property type="entry name" value="Transcription_factor_dom_fun"/>
</dbReference>
<dbReference type="InterPro" id="IPR036864">
    <property type="entry name" value="Zn2-C6_fun-type_DNA-bd_sf"/>
</dbReference>
<dbReference type="InterPro" id="IPR001138">
    <property type="entry name" value="Zn2Cys6_DnaBD"/>
</dbReference>
<dbReference type="PANTHER" id="PTHR46910:SF3">
    <property type="entry name" value="HALOTOLERANCE PROTEIN 9-RELATED"/>
    <property type="match status" value="1"/>
</dbReference>
<dbReference type="PANTHER" id="PTHR46910">
    <property type="entry name" value="TRANSCRIPTION FACTOR PDR1"/>
    <property type="match status" value="1"/>
</dbReference>
<dbReference type="Pfam" id="PF04082">
    <property type="entry name" value="Fungal_trans"/>
    <property type="match status" value="1"/>
</dbReference>
<dbReference type="Pfam" id="PF00172">
    <property type="entry name" value="Zn_clus"/>
    <property type="match status" value="1"/>
</dbReference>
<dbReference type="SMART" id="SM00906">
    <property type="entry name" value="Fungal_trans"/>
    <property type="match status" value="1"/>
</dbReference>
<dbReference type="SMART" id="SM00066">
    <property type="entry name" value="GAL4"/>
    <property type="match status" value="1"/>
</dbReference>
<dbReference type="SUPFAM" id="SSF57701">
    <property type="entry name" value="Zn2/Cys6 DNA-binding domain"/>
    <property type="match status" value="1"/>
</dbReference>
<dbReference type="PROSITE" id="PS00463">
    <property type="entry name" value="ZN2_CY6_FUNGAL_1"/>
    <property type="match status" value="1"/>
</dbReference>
<dbReference type="PROSITE" id="PS50048">
    <property type="entry name" value="ZN2_CY6_FUNGAL_2"/>
    <property type="match status" value="1"/>
</dbReference>
<proteinExistence type="evidence at protein level"/>
<keyword id="KW-0010">Activator</keyword>
<keyword id="KW-0238">DNA-binding</keyword>
<keyword id="KW-0479">Metal-binding</keyword>
<keyword id="KW-0539">Nucleus</keyword>
<keyword id="KW-0597">Phosphoprotein</keyword>
<keyword id="KW-1185">Reference proteome</keyword>
<keyword id="KW-0804">Transcription</keyword>
<keyword id="KW-0805">Transcription regulation</keyword>
<keyword id="KW-0862">Zinc</keyword>
<organism>
    <name type="scientific">Saccharomyces cerevisiae (strain ATCC 204508 / S288c)</name>
    <name type="common">Baker's yeast</name>
    <dbReference type="NCBI Taxonomy" id="559292"/>
    <lineage>
        <taxon>Eukaryota</taxon>
        <taxon>Fungi</taxon>
        <taxon>Dikarya</taxon>
        <taxon>Ascomycota</taxon>
        <taxon>Saccharomycotina</taxon>
        <taxon>Saccharomycetes</taxon>
        <taxon>Saccharomycetales</taxon>
        <taxon>Saccharomycetaceae</taxon>
        <taxon>Saccharomyces</taxon>
    </lineage>
</organism>
<accession>P12383</accession>
<accession>D6VUC4</accession>
<evidence type="ECO:0000255" key="1">
    <source>
        <dbReference type="PROSITE-ProRule" id="PRU00227"/>
    </source>
</evidence>
<evidence type="ECO:0000256" key="2">
    <source>
        <dbReference type="SAM" id="MobiDB-lite"/>
    </source>
</evidence>
<evidence type="ECO:0000269" key="3">
    <source>
    </source>
</evidence>
<evidence type="ECO:0000269" key="4">
    <source>
    </source>
</evidence>
<evidence type="ECO:0000305" key="5"/>
<evidence type="ECO:0000305" key="6">
    <source>
    </source>
</evidence>
<evidence type="ECO:0007744" key="7">
    <source>
    </source>
</evidence>
<evidence type="ECO:0007744" key="8">
    <source>
    </source>
</evidence>
<evidence type="ECO:0007744" key="9">
    <source>
    </source>
</evidence>
<reference key="1">
    <citation type="journal article" date="1987" name="J. Biol. Chem.">
        <title>The multidrug resistance gene PDR1 from Saccharomyces cerevisiae.</title>
        <authorList>
            <person name="Balzi E."/>
            <person name="Chen W."/>
            <person name="Ulaszewski S."/>
            <person name="Capieaux E."/>
            <person name="Goffeau A."/>
        </authorList>
    </citation>
    <scope>NUCLEOTIDE SEQUENCE [GENOMIC DNA]</scope>
    <source>
        <strain>ATCC 46191 / IL125-2B</strain>
    </source>
</reference>
<reference key="2">
    <citation type="journal article" date="1991" name="Yeast">
        <title>The DNA sequencing of the 17 kb HindIII fragment spanning the LEU1 and ATE1 loci on chromosome VII from Saccharomyces cerevisiae reveals the PDR6 gene, a new member of the genetic network controlling pleiotropic drug resistance.</title>
        <authorList>
            <person name="Chen W."/>
            <person name="Balzi E."/>
            <person name="Capieaux E."/>
            <person name="Choder M."/>
            <person name="Goffeau A."/>
        </authorList>
    </citation>
    <scope>NUCLEOTIDE SEQUENCE [GENOMIC DNA]</scope>
</reference>
<reference key="3">
    <citation type="journal article" date="1997" name="Nature">
        <title>The nucleotide sequence of Saccharomyces cerevisiae chromosome VII.</title>
        <authorList>
            <person name="Tettelin H."/>
            <person name="Agostoni-Carbone M.L."/>
            <person name="Albermann K."/>
            <person name="Albers M."/>
            <person name="Arroyo J."/>
            <person name="Backes U."/>
            <person name="Barreiros T."/>
            <person name="Bertani I."/>
            <person name="Bjourson A.J."/>
            <person name="Brueckner M."/>
            <person name="Bruschi C.V."/>
            <person name="Carignani G."/>
            <person name="Castagnoli L."/>
            <person name="Cerdan E."/>
            <person name="Clemente M.L."/>
            <person name="Coblenz A."/>
            <person name="Coglievina M."/>
            <person name="Coissac E."/>
            <person name="Defoor E."/>
            <person name="Del Bino S."/>
            <person name="Delius H."/>
            <person name="Delneri D."/>
            <person name="de Wergifosse P."/>
            <person name="Dujon B."/>
            <person name="Durand P."/>
            <person name="Entian K.-D."/>
            <person name="Eraso P."/>
            <person name="Escribano V."/>
            <person name="Fabiani L."/>
            <person name="Fartmann B."/>
            <person name="Feroli F."/>
            <person name="Feuermann M."/>
            <person name="Frontali L."/>
            <person name="Garcia-Gonzalez M."/>
            <person name="Garcia-Saez M.I."/>
            <person name="Goffeau A."/>
            <person name="Guerreiro P."/>
            <person name="Hani J."/>
            <person name="Hansen M."/>
            <person name="Hebling U."/>
            <person name="Hernandez K."/>
            <person name="Heumann K."/>
            <person name="Hilger F."/>
            <person name="Hofmann B."/>
            <person name="Indge K.J."/>
            <person name="James C.M."/>
            <person name="Klima R."/>
            <person name="Koetter P."/>
            <person name="Kramer B."/>
            <person name="Kramer W."/>
            <person name="Lauquin G."/>
            <person name="Leuther H."/>
            <person name="Louis E.J."/>
            <person name="Maillier E."/>
            <person name="Marconi A."/>
            <person name="Martegani E."/>
            <person name="Mazon M.J."/>
            <person name="Mazzoni C."/>
            <person name="McReynolds A.D.K."/>
            <person name="Melchioretto P."/>
            <person name="Mewes H.-W."/>
            <person name="Minenkova O."/>
            <person name="Mueller-Auer S."/>
            <person name="Nawrocki A."/>
            <person name="Netter P."/>
            <person name="Neu R."/>
            <person name="Nombela C."/>
            <person name="Oliver S.G."/>
            <person name="Panzeri L."/>
            <person name="Paoluzi S."/>
            <person name="Plevani P."/>
            <person name="Portetelle D."/>
            <person name="Portillo F."/>
            <person name="Potier S."/>
            <person name="Purnelle B."/>
            <person name="Rieger M."/>
            <person name="Riles L."/>
            <person name="Rinaldi T."/>
            <person name="Robben J."/>
            <person name="Rodrigues-Pousada C."/>
            <person name="Rodriguez-Belmonte E."/>
            <person name="Rodriguez-Torres A.M."/>
            <person name="Rose M."/>
            <person name="Ruzzi M."/>
            <person name="Saliola M."/>
            <person name="Sanchez-Perez M."/>
            <person name="Schaefer B."/>
            <person name="Schaefer M."/>
            <person name="Scharfe M."/>
            <person name="Schmidheini T."/>
            <person name="Schreer A."/>
            <person name="Skala J."/>
            <person name="Souciet J.-L."/>
            <person name="Steensma H.Y."/>
            <person name="Talla E."/>
            <person name="Thierry A."/>
            <person name="Vandenbol M."/>
            <person name="van der Aart Q.J.M."/>
            <person name="Van Dyck L."/>
            <person name="Vanoni M."/>
            <person name="Verhasselt P."/>
            <person name="Voet M."/>
            <person name="Volckaert G."/>
            <person name="Wambutt R."/>
            <person name="Watson M.D."/>
            <person name="Weber N."/>
            <person name="Wedler E."/>
            <person name="Wedler H."/>
            <person name="Wipfli P."/>
            <person name="Wolf K."/>
            <person name="Wright L.F."/>
            <person name="Zaccaria P."/>
            <person name="Zimmermann M."/>
            <person name="Zollner A."/>
            <person name="Kleine K."/>
        </authorList>
    </citation>
    <scope>NUCLEOTIDE SEQUENCE [LARGE SCALE GENOMIC DNA]</scope>
    <source>
        <strain>ATCC 204508 / S288c</strain>
    </source>
</reference>
<reference key="4">
    <citation type="journal article" date="2014" name="G3 (Bethesda)">
        <title>The reference genome sequence of Saccharomyces cerevisiae: Then and now.</title>
        <authorList>
            <person name="Engel S.R."/>
            <person name="Dietrich F.S."/>
            <person name="Fisk D.G."/>
            <person name="Binkley G."/>
            <person name="Balakrishnan R."/>
            <person name="Costanzo M.C."/>
            <person name="Dwight S.S."/>
            <person name="Hitz B.C."/>
            <person name="Karra K."/>
            <person name="Nash R.S."/>
            <person name="Weng S."/>
            <person name="Wong E.D."/>
            <person name="Lloyd P."/>
            <person name="Skrzypek M.S."/>
            <person name="Miyasato S.R."/>
            <person name="Simison M."/>
            <person name="Cherry J.M."/>
        </authorList>
    </citation>
    <scope>GENOME REANNOTATION</scope>
    <source>
        <strain>ATCC 204508 / S288c</strain>
    </source>
</reference>
<reference key="5">
    <citation type="journal article" date="2003" name="Nature">
        <title>Global analysis of protein expression in yeast.</title>
        <authorList>
            <person name="Ghaemmaghami S."/>
            <person name="Huh W.-K."/>
            <person name="Bower K."/>
            <person name="Howson R.W."/>
            <person name="Belle A."/>
            <person name="Dephoure N."/>
            <person name="O'Shea E.K."/>
            <person name="Weissman J.S."/>
        </authorList>
    </citation>
    <scope>LEVEL OF PROTEIN EXPRESSION [LARGE SCALE ANALYSIS]</scope>
</reference>
<reference key="6">
    <citation type="journal article" date="2007" name="J. Proteome Res.">
        <title>Large-scale phosphorylation analysis of alpha-factor-arrested Saccharomyces cerevisiae.</title>
        <authorList>
            <person name="Li X."/>
            <person name="Gerber S.A."/>
            <person name="Rudner A.D."/>
            <person name="Beausoleil S.A."/>
            <person name="Haas W."/>
            <person name="Villen J."/>
            <person name="Elias J.E."/>
            <person name="Gygi S.P."/>
        </authorList>
    </citation>
    <scope>PHOSPHORYLATION [LARGE SCALE ANALYSIS] AT SER-948</scope>
    <scope>IDENTIFICATION BY MASS SPECTROMETRY [LARGE SCALE ANALYSIS]</scope>
    <source>
        <strain>ADR376</strain>
    </source>
</reference>
<reference key="7">
    <citation type="journal article" date="2008" name="Mol. Cell. Proteomics">
        <title>A multidimensional chromatography technology for in-depth phosphoproteome analysis.</title>
        <authorList>
            <person name="Albuquerque C.P."/>
            <person name="Smolka M.B."/>
            <person name="Payne S.H."/>
            <person name="Bafna V."/>
            <person name="Eng J."/>
            <person name="Zhou H."/>
        </authorList>
    </citation>
    <scope>PHOSPHORYLATION [LARGE SCALE ANALYSIS] AT SER-930 AND SER-948</scope>
    <scope>IDENTIFICATION BY MASS SPECTROMETRY [LARGE SCALE ANALYSIS]</scope>
</reference>
<reference key="8">
    <citation type="journal article" date="2009" name="Science">
        <title>Global analysis of Cdk1 substrate phosphorylation sites provides insights into evolution.</title>
        <authorList>
            <person name="Holt L.J."/>
            <person name="Tuch B.B."/>
            <person name="Villen J."/>
            <person name="Johnson A.D."/>
            <person name="Gygi S.P."/>
            <person name="Morgan D.O."/>
        </authorList>
    </citation>
    <scope>PHOSPHORYLATION [LARGE SCALE ANALYSIS] AT SER-21; SER-942 AND SER-948</scope>
    <scope>IDENTIFICATION BY MASS SPECTROMETRY [LARGE SCALE ANALYSIS]</scope>
</reference>
<reference key="9">
    <citation type="journal article" date="2016" name="PLoS ONE">
        <title>The 9aaTAD transactivation domains: From Gal4 to p53.</title>
        <authorList>
            <person name="Piskacek M."/>
            <person name="Havelka M."/>
            <person name="Rezacova M."/>
            <person name="Knight A."/>
        </authorList>
    </citation>
    <scope>DOMAIN</scope>
</reference>
<gene>
    <name type="primary">PDR1</name>
    <name type="synonym">AMY1</name>
    <name type="synonym">ANT1</name>
    <name type="synonym">BOR2</name>
    <name type="synonym">CYH3</name>
    <name type="synonym">NRA2</name>
    <name type="synonym">SMR2</name>
    <name type="synonym">TIL1</name>
    <name type="synonym">TPE1</name>
    <name type="synonym">TPE3</name>
    <name type="ordered locus">YGL013C</name>
</gene>